<name>FOLQ_LIMRD</name>
<dbReference type="EC" id="3.6.1.67" evidence="2"/>
<dbReference type="EMBL" id="CP000705">
    <property type="protein sequence ID" value="ABQ83533.1"/>
    <property type="molecule type" value="Genomic_DNA"/>
</dbReference>
<dbReference type="RefSeq" id="WP_003668525.1">
    <property type="nucleotide sequence ID" value="NC_009513.1"/>
</dbReference>
<dbReference type="SMR" id="A5VL09"/>
<dbReference type="STRING" id="557436.Lreu_1276"/>
<dbReference type="KEGG" id="lre:Lreu_1276"/>
<dbReference type="PATRIC" id="fig|557436.17.peg.587"/>
<dbReference type="eggNOG" id="COG0127">
    <property type="taxonomic scope" value="Bacteria"/>
</dbReference>
<dbReference type="HOGENOM" id="CLU_082080_2_0_9"/>
<dbReference type="OMA" id="MDRHAYL"/>
<dbReference type="UniPathway" id="UPA00077"/>
<dbReference type="Proteomes" id="UP000001991">
    <property type="component" value="Chromosome"/>
</dbReference>
<dbReference type="GO" id="GO:0005829">
    <property type="term" value="C:cytosol"/>
    <property type="evidence" value="ECO:0007669"/>
    <property type="project" value="TreeGrafter"/>
</dbReference>
<dbReference type="GO" id="GO:0047429">
    <property type="term" value="F:nucleoside triphosphate diphosphatase activity"/>
    <property type="evidence" value="ECO:0007669"/>
    <property type="project" value="InterPro"/>
</dbReference>
<dbReference type="GO" id="GO:0009143">
    <property type="term" value="P:nucleoside triphosphate catabolic process"/>
    <property type="evidence" value="ECO:0007669"/>
    <property type="project" value="InterPro"/>
</dbReference>
<dbReference type="CDD" id="cd00515">
    <property type="entry name" value="HAM1"/>
    <property type="match status" value="1"/>
</dbReference>
<dbReference type="Gene3D" id="3.90.950.10">
    <property type="match status" value="1"/>
</dbReference>
<dbReference type="InterPro" id="IPR029001">
    <property type="entry name" value="ITPase-like_fam"/>
</dbReference>
<dbReference type="InterPro" id="IPR002637">
    <property type="entry name" value="RdgB/HAM1"/>
</dbReference>
<dbReference type="PANTHER" id="PTHR11067:SF9">
    <property type="entry name" value="INOSINE TRIPHOSPHATE PYROPHOSPHATASE"/>
    <property type="match status" value="1"/>
</dbReference>
<dbReference type="PANTHER" id="PTHR11067">
    <property type="entry name" value="INOSINE TRIPHOSPHATE PYROPHOSPHATASE/HAM1 PROTEIN"/>
    <property type="match status" value="1"/>
</dbReference>
<dbReference type="Pfam" id="PF01725">
    <property type="entry name" value="Ham1p_like"/>
    <property type="match status" value="1"/>
</dbReference>
<dbReference type="SUPFAM" id="SSF52972">
    <property type="entry name" value="ITPase-like"/>
    <property type="match status" value="1"/>
</dbReference>
<evidence type="ECO:0000250" key="1">
    <source>
        <dbReference type="UniProtKB" id="P52061"/>
    </source>
</evidence>
<evidence type="ECO:0000269" key="2">
    <source>
    </source>
</evidence>
<evidence type="ECO:0000303" key="3">
    <source>
    </source>
</evidence>
<evidence type="ECO:0000305" key="4"/>
<evidence type="ECO:0000305" key="5">
    <source>
    </source>
</evidence>
<evidence type="ECO:0000312" key="6">
    <source>
        <dbReference type="EMBL" id="ABQ83533.1"/>
    </source>
</evidence>
<keyword id="KW-0378">Hydrolase</keyword>
<keyword id="KW-0464">Manganese</keyword>
<keyword id="KW-1185">Reference proteome</keyword>
<gene>
    <name evidence="3" type="primary">folQ3</name>
    <name evidence="6" type="ordered locus">Lreu_1276</name>
</gene>
<organism>
    <name type="scientific">Limosilactobacillus reuteri (strain DSM 20016)</name>
    <name type="common">Lactobacillus reuteri</name>
    <dbReference type="NCBI Taxonomy" id="557436"/>
    <lineage>
        <taxon>Bacteria</taxon>
        <taxon>Bacillati</taxon>
        <taxon>Bacillota</taxon>
        <taxon>Bacilli</taxon>
        <taxon>Lactobacillales</taxon>
        <taxon>Lactobacillaceae</taxon>
        <taxon>Limosilactobacillus</taxon>
    </lineage>
</organism>
<protein>
    <recommendedName>
        <fullName evidence="4">Dihydroneopterin triphosphate diphosphatase</fullName>
        <ecNumber evidence="2">3.6.1.67</ecNumber>
    </recommendedName>
    <alternativeName>
        <fullName evidence="3">Dihydroneopterin triphosphate pyrophosphohydrolase</fullName>
        <shortName evidence="3">DHNTP pyrophosphohydrolase</shortName>
    </alternativeName>
    <alternativeName>
        <fullName evidence="3">Lr-FolQ3</fullName>
    </alternativeName>
</protein>
<comment type="function">
    <text evidence="2">Pyrophosphatase involved in the biosynthesis of tetrahydrofolate (PubMed:38888337). Catalyzes the hydrolysis of dihydroneopterin triphosphate (DHNTP) to dihydroneopterin monophosphate (DHNMP) and pyrophosphate (PubMed:38888337). Shows a strict substrate specificity (PubMed:38888337). Has only weak activity with GTP, ITP, XTP and dTTP, and cannot use ATP, UTP, CTP, NAD(+), NADH, diadenosine triphosphate, diadenosine tetraphosphate, ADP-ribose and UDP-glucose (PubMed:38888337).</text>
</comment>
<comment type="catalytic activity">
    <reaction evidence="2">
        <text>7,8-dihydroneopterin 3'-triphosphate + H2O = 7,8-dihydroneopterin 3'-phosphate + diphosphate + H(+)</text>
        <dbReference type="Rhea" id="RHEA:25302"/>
        <dbReference type="ChEBI" id="CHEBI:15377"/>
        <dbReference type="ChEBI" id="CHEBI:15378"/>
        <dbReference type="ChEBI" id="CHEBI:33019"/>
        <dbReference type="ChEBI" id="CHEBI:58462"/>
        <dbReference type="ChEBI" id="CHEBI:58762"/>
        <dbReference type="EC" id="3.6.1.67"/>
    </reaction>
    <physiologicalReaction direction="left-to-right" evidence="5">
        <dbReference type="Rhea" id="RHEA:25303"/>
    </physiologicalReaction>
</comment>
<comment type="cofactor">
    <cofactor evidence="2">
        <name>Mn(2+)</name>
        <dbReference type="ChEBI" id="CHEBI:29035"/>
    </cofactor>
    <text evidence="2">Maximum activity is obtained with Mn(2+) and activity is enhanced with increasing Mn(2+) concentration, at least up to 8 mM (PubMed:38888337). Has low activity with Mg(2+) or Zn(2+) ions (PubMed:38888337).</text>
</comment>
<comment type="biophysicochemical properties">
    <phDependence>
        <text evidence="2">Optimum pH is around 6.5-7.0.</text>
    </phDependence>
    <temperatureDependence>
        <text evidence="2">Optimum temperature is 35 degrees Celsius.</text>
    </temperatureDependence>
</comment>
<comment type="pathway">
    <text evidence="5">Cofactor biosynthesis; tetrahydrofolate biosynthesis.</text>
</comment>
<comment type="similarity">
    <text evidence="4">Belongs to the HAM1 NTPase family.</text>
</comment>
<feature type="chain" id="PRO_0000461450" description="Dihydroneopterin triphosphate diphosphatase">
    <location>
        <begin position="1"/>
        <end position="195"/>
    </location>
</feature>
<feature type="active site" description="Proton acceptor" evidence="1">
    <location>
        <position position="73"/>
    </location>
</feature>
<accession>A5VL09</accession>
<reference key="1">
    <citation type="journal article" date="2011" name="PLoS Genet.">
        <title>The evolution of host specialization in the vertebrate gut symbiont Lactobacillus reuteri.</title>
        <authorList>
            <person name="Frese S.A."/>
            <person name="Benson A.K."/>
            <person name="Tannock G.W."/>
            <person name="Loach D.M."/>
            <person name="Kim J."/>
            <person name="Zhang M."/>
            <person name="Oh P.L."/>
            <person name="Heng N.C."/>
            <person name="Patil P.B."/>
            <person name="Juge N."/>
            <person name="Mackenzie D.A."/>
            <person name="Pearson B.M."/>
            <person name="Lapidus A."/>
            <person name="Dalin E."/>
            <person name="Tice H."/>
            <person name="Goltsman E."/>
            <person name="Land M."/>
            <person name="Hauser L."/>
            <person name="Ivanova N."/>
            <person name="Kyrpides N.C."/>
            <person name="Walter J."/>
        </authorList>
    </citation>
    <scope>NUCLEOTIDE SEQUENCE [LARGE SCALE GENOMIC DNA]</scope>
    <source>
        <strain>DSM 20016</strain>
    </source>
</reference>
<reference key="2">
    <citation type="journal article" date="2024" name="Appl. Environ. Microbiol.">
        <title>The Lreu_1276 protein from Limosilactobacillus reuteri represents a third family of dihydroneopterin triphosphate pyrophosphohydrolases in bacteria.</title>
        <authorList>
            <person name="Kachi K."/>
            <person name="Sato T."/>
            <person name="Nagasawa M."/>
            <person name="Cann I."/>
            <person name="Atomi H."/>
        </authorList>
    </citation>
    <scope>FUNCTION</scope>
    <scope>CATALYTIC ACTIVITY</scope>
    <scope>COFACTOR</scope>
    <scope>BIOPHYSICOCHEMICAL PROPERTIES</scope>
    <scope>PATHWAY</scope>
</reference>
<proteinExistence type="evidence at protein level"/>
<sequence>MKNNFIIATHNIHKIKEIETILNFYRQHGEGYRKKLPQQAFPPESTVSYEENAKEKALFISQQLPAAKIIADDSGLELPAFPGRYGVQTARELAQEVPDGDLNDYLIHLVDGKSRQFIMKTTIALAINNQVVKIGHGQLKGTIAHAERGVNATGFDRIFIPAGESQTLAEMDQPTRISYLHRARAVKNLLDQLGE</sequence>